<accession>Q2TBQ4</accession>
<feature type="chain" id="PRO_0000308414" description="Transmembrane protein 270">
    <location>
        <begin position="1"/>
        <end position="262"/>
    </location>
</feature>
<feature type="transmembrane region" description="Helical" evidence="2">
    <location>
        <begin position="6"/>
        <end position="26"/>
    </location>
</feature>
<feature type="transmembrane region" description="Helical" evidence="2">
    <location>
        <begin position="30"/>
        <end position="50"/>
    </location>
</feature>
<feature type="transmembrane region" description="Helical" evidence="2">
    <location>
        <begin position="67"/>
        <end position="87"/>
    </location>
</feature>
<feature type="transmembrane region" description="Helical" evidence="2">
    <location>
        <begin position="92"/>
        <end position="112"/>
    </location>
</feature>
<feature type="transmembrane region" description="Helical" evidence="2">
    <location>
        <begin position="127"/>
        <end position="147"/>
    </location>
</feature>
<feature type="region of interest" description="Disordered" evidence="3">
    <location>
        <begin position="226"/>
        <end position="262"/>
    </location>
</feature>
<feature type="compositionally biased region" description="Pro residues" evidence="3">
    <location>
        <begin position="240"/>
        <end position="262"/>
    </location>
</feature>
<comment type="subcellular location">
    <subcellularLocation>
        <location evidence="4">Membrane</location>
        <topology evidence="4">Multi-pass membrane protein</topology>
    </subcellularLocation>
</comment>
<protein>
    <recommendedName>
        <fullName evidence="4">Transmembrane protein 270</fullName>
    </recommendedName>
</protein>
<keyword id="KW-0472">Membrane</keyword>
<keyword id="KW-1185">Reference proteome</keyword>
<keyword id="KW-0812">Transmembrane</keyword>
<keyword id="KW-1133">Transmembrane helix</keyword>
<sequence length="262" mass="28644">MEAIPLVRSSLSGTLLVVVKLSALLIQNRAHLYNFLLLKIFLFNHWLLGLTQEAQGFHPPSKIAGCPVGRVLWAGLTLLEVPVCLALRVPRLVWAGLLGCARALGLGPKWLGAWEQLGLSAATWTDLFLSCLHSLMLAALLLLLLVWRLYQKAQCCSLGRLPRKALLQNRVVRRSLALLKSLYWWVESTAALTSWHLAYLITWTTCLASHLLQAAFEHTAQLAQAQEAEPQKALGLSSETPPPGPPAPGARPVLPEPGTPGE</sequence>
<evidence type="ECO:0000250" key="1">
    <source>
        <dbReference type="UniProtKB" id="Q6UE05"/>
    </source>
</evidence>
<evidence type="ECO:0000255" key="2"/>
<evidence type="ECO:0000256" key="3">
    <source>
        <dbReference type="SAM" id="MobiDB-lite"/>
    </source>
</evidence>
<evidence type="ECO:0000305" key="4"/>
<proteinExistence type="evidence at transcript level"/>
<reference key="1">
    <citation type="submission" date="2005-11" db="EMBL/GenBank/DDBJ databases">
        <authorList>
            <consortium name="NIH - Mammalian Gene Collection (MGC) project"/>
        </authorList>
    </citation>
    <scope>NUCLEOTIDE SEQUENCE [LARGE SCALE MRNA]</scope>
    <source>
        <strain>Crossbred X Angus</strain>
        <tissue>Liver</tissue>
    </source>
</reference>
<dbReference type="EMBL" id="BC109817">
    <property type="protein sequence ID" value="AAI09818.1"/>
    <property type="molecule type" value="mRNA"/>
</dbReference>
<dbReference type="RefSeq" id="NP_001069914.1">
    <property type="nucleotide sequence ID" value="NM_001076446.1"/>
</dbReference>
<dbReference type="FunCoup" id="Q2TBQ4">
    <property type="interactions" value="6"/>
</dbReference>
<dbReference type="STRING" id="9913.ENSBTAP00000019713"/>
<dbReference type="PaxDb" id="9913-ENSBTAP00000019713"/>
<dbReference type="GeneID" id="617180"/>
<dbReference type="KEGG" id="bta:617180"/>
<dbReference type="CTD" id="135886"/>
<dbReference type="eggNOG" id="ENOG502T0K9">
    <property type="taxonomic scope" value="Eukaryota"/>
</dbReference>
<dbReference type="InParanoid" id="Q2TBQ4"/>
<dbReference type="OrthoDB" id="9837709at2759"/>
<dbReference type="Proteomes" id="UP000009136">
    <property type="component" value="Unplaced"/>
</dbReference>
<dbReference type="GO" id="GO:0016020">
    <property type="term" value="C:membrane"/>
    <property type="evidence" value="ECO:0007669"/>
    <property type="project" value="UniProtKB-SubCell"/>
</dbReference>
<dbReference type="InterPro" id="IPR029166">
    <property type="entry name" value="WBS28"/>
</dbReference>
<dbReference type="PANTHER" id="PTHR37369">
    <property type="entry name" value="TRANSMEMBRANE PROTEIN 270"/>
    <property type="match status" value="1"/>
</dbReference>
<dbReference type="PANTHER" id="PTHR37369:SF1">
    <property type="entry name" value="TRANSMEMBRANE PROTEIN 270"/>
    <property type="match status" value="1"/>
</dbReference>
<dbReference type="Pfam" id="PF15164">
    <property type="entry name" value="WBS28"/>
    <property type="match status" value="1"/>
</dbReference>
<gene>
    <name evidence="1" type="primary">TMEM270</name>
</gene>
<name>TM270_BOVIN</name>
<organism>
    <name type="scientific">Bos taurus</name>
    <name type="common">Bovine</name>
    <dbReference type="NCBI Taxonomy" id="9913"/>
    <lineage>
        <taxon>Eukaryota</taxon>
        <taxon>Metazoa</taxon>
        <taxon>Chordata</taxon>
        <taxon>Craniata</taxon>
        <taxon>Vertebrata</taxon>
        <taxon>Euteleostomi</taxon>
        <taxon>Mammalia</taxon>
        <taxon>Eutheria</taxon>
        <taxon>Laurasiatheria</taxon>
        <taxon>Artiodactyla</taxon>
        <taxon>Ruminantia</taxon>
        <taxon>Pecora</taxon>
        <taxon>Bovidae</taxon>
        <taxon>Bovinae</taxon>
        <taxon>Bos</taxon>
    </lineage>
</organism>